<keyword id="KW-0004">4Fe-4S</keyword>
<keyword id="KW-0249">Electron transport</keyword>
<keyword id="KW-0408">Iron</keyword>
<keyword id="KW-0411">Iron-sulfur</keyword>
<keyword id="KW-0479">Metal-binding</keyword>
<keyword id="KW-0677">Repeat</keyword>
<keyword id="KW-0813">Transport</keyword>
<organism>
    <name type="scientific">Bacillus cytotoxicus (strain DSM 22905 / CIP 110041 / 391-98 / NVH 391-98)</name>
    <dbReference type="NCBI Taxonomy" id="315749"/>
    <lineage>
        <taxon>Bacteria</taxon>
        <taxon>Bacillati</taxon>
        <taxon>Bacillota</taxon>
        <taxon>Bacilli</taxon>
        <taxon>Bacillales</taxon>
        <taxon>Bacillaceae</taxon>
        <taxon>Bacillus</taxon>
        <taxon>Bacillus cereus group</taxon>
    </lineage>
</organism>
<evidence type="ECO:0000255" key="1">
    <source>
        <dbReference type="HAMAP-Rule" id="MF_02103"/>
    </source>
</evidence>
<sequence length="473" mass="52669">MSMKISEKKFNDRVGDGIQDSFMRGAVTSAQTRLYTNRLKAADELGNWEEWRELGEQIRQHTLENLDYYLMQLSENVSKRGGNVFFAKTKEEAANYIQEVAKKKNAKKVVKSKSMVTEEISMNHALEEIGCEVVESDLGEYILQVDNDPPSHIVAPALHKNKTQIRDVFKEKLGYENSDDPYEMTKFVRKHLRKKFMDAEIGITGCNFAVANTGSLCLVTNEGNADLVMSIPKTQIAVMGMERMVPTMEELDVLVGLLCRSAVGQKLTSYVTVAGPIQEEEIDGPEEFHLVIVDNGRSEILGSEFRQVLQCIRCAACINVCPVYRHVGGHSYGSIYPGPIGAVLSPLLGGYDDYKELPYASSLCGACTEACPVKIPLHDLLLKHRQVIVEKEGRAPLAEKLAMKMFSMGASSAALYKIGSKMAPVALSPFTSGNRVTKGVGPLKNWTEIREFPAPSKERFRDWYKEHKKGGDK</sequence>
<proteinExistence type="inferred from homology"/>
<reference key="1">
    <citation type="journal article" date="2008" name="Chem. Biol. Interact.">
        <title>Extending the Bacillus cereus group genomics to putative food-borne pathogens of different toxicity.</title>
        <authorList>
            <person name="Lapidus A."/>
            <person name="Goltsman E."/>
            <person name="Auger S."/>
            <person name="Galleron N."/>
            <person name="Segurens B."/>
            <person name="Dossat C."/>
            <person name="Land M.L."/>
            <person name="Broussolle V."/>
            <person name="Brillard J."/>
            <person name="Guinebretiere M.-H."/>
            <person name="Sanchis V."/>
            <person name="Nguen-the C."/>
            <person name="Lereclus D."/>
            <person name="Richardson P."/>
            <person name="Wincker P."/>
            <person name="Weissenbach J."/>
            <person name="Ehrlich S.D."/>
            <person name="Sorokin A."/>
        </authorList>
    </citation>
    <scope>NUCLEOTIDE SEQUENCE [LARGE SCALE GENOMIC DNA]</scope>
    <source>
        <strain>DSM 22905 / CIP 110041 / 391-98 / NVH 391-98</strain>
    </source>
</reference>
<protein>
    <recommendedName>
        <fullName evidence="1">Lactate utilization protein B</fullName>
    </recommendedName>
</protein>
<dbReference type="EMBL" id="CP000764">
    <property type="protein sequence ID" value="ABS21351.1"/>
    <property type="molecule type" value="Genomic_DNA"/>
</dbReference>
<dbReference type="RefSeq" id="WP_011984104.1">
    <property type="nucleotide sequence ID" value="NC_009674.1"/>
</dbReference>
<dbReference type="STRING" id="315749.Bcer98_1025"/>
<dbReference type="GeneID" id="33896384"/>
<dbReference type="KEGG" id="bcy:Bcer98_1025"/>
<dbReference type="eggNOG" id="COG1139">
    <property type="taxonomic scope" value="Bacteria"/>
</dbReference>
<dbReference type="HOGENOM" id="CLU_027059_2_0_9"/>
<dbReference type="OrthoDB" id="9782337at2"/>
<dbReference type="Proteomes" id="UP000002300">
    <property type="component" value="Chromosome"/>
</dbReference>
<dbReference type="GO" id="GO:0051539">
    <property type="term" value="F:4 iron, 4 sulfur cluster binding"/>
    <property type="evidence" value="ECO:0007669"/>
    <property type="project" value="UniProtKB-KW"/>
</dbReference>
<dbReference type="GO" id="GO:0046872">
    <property type="term" value="F:metal ion binding"/>
    <property type="evidence" value="ECO:0007669"/>
    <property type="project" value="UniProtKB-KW"/>
</dbReference>
<dbReference type="GO" id="GO:0006089">
    <property type="term" value="P:lactate metabolic process"/>
    <property type="evidence" value="ECO:0007669"/>
    <property type="project" value="UniProtKB-UniRule"/>
</dbReference>
<dbReference type="Gene3D" id="1.10.1060.10">
    <property type="entry name" value="Alpha-helical ferredoxin"/>
    <property type="match status" value="1"/>
</dbReference>
<dbReference type="Gene3D" id="3.40.50.10420">
    <property type="entry name" value="NagB/RpiA/CoA transferase-like"/>
    <property type="match status" value="1"/>
</dbReference>
<dbReference type="HAMAP" id="MF_02103">
    <property type="entry name" value="LutB"/>
    <property type="match status" value="1"/>
</dbReference>
<dbReference type="InterPro" id="IPR017896">
    <property type="entry name" value="4Fe4S_Fe-S-bd"/>
</dbReference>
<dbReference type="InterPro" id="IPR017900">
    <property type="entry name" value="4Fe4S_Fe_S_CS"/>
</dbReference>
<dbReference type="InterPro" id="IPR024185">
    <property type="entry name" value="FTHF_cligase-like_sf"/>
</dbReference>
<dbReference type="InterPro" id="IPR009051">
    <property type="entry name" value="Helical_ferredxn"/>
</dbReference>
<dbReference type="InterPro" id="IPR003741">
    <property type="entry name" value="LUD_dom"/>
</dbReference>
<dbReference type="InterPro" id="IPR022825">
    <property type="entry name" value="LutB"/>
</dbReference>
<dbReference type="InterPro" id="IPR004452">
    <property type="entry name" value="LutB/LldF"/>
</dbReference>
<dbReference type="InterPro" id="IPR024569">
    <property type="entry name" value="LutB_C"/>
</dbReference>
<dbReference type="InterPro" id="IPR037171">
    <property type="entry name" value="NagB/RpiA_transferase-like"/>
</dbReference>
<dbReference type="NCBIfam" id="TIGR00273">
    <property type="entry name" value="LutB/LldF family L-lactate oxidation iron-sulfur protein"/>
    <property type="match status" value="1"/>
</dbReference>
<dbReference type="PANTHER" id="PTHR47153">
    <property type="entry name" value="LACTATE UTILIZATION PROTEIN B"/>
    <property type="match status" value="1"/>
</dbReference>
<dbReference type="PANTHER" id="PTHR47153:SF2">
    <property type="entry name" value="LACTATE UTILIZATION PROTEIN B"/>
    <property type="match status" value="1"/>
</dbReference>
<dbReference type="Pfam" id="PF13183">
    <property type="entry name" value="Fer4_8"/>
    <property type="match status" value="1"/>
</dbReference>
<dbReference type="Pfam" id="PF02589">
    <property type="entry name" value="LUD_dom"/>
    <property type="match status" value="1"/>
</dbReference>
<dbReference type="Pfam" id="PF11870">
    <property type="entry name" value="LutB_C"/>
    <property type="match status" value="1"/>
</dbReference>
<dbReference type="SUPFAM" id="SSF46548">
    <property type="entry name" value="alpha-helical ferredoxin"/>
    <property type="match status" value="1"/>
</dbReference>
<dbReference type="SUPFAM" id="SSF100950">
    <property type="entry name" value="NagB/RpiA/CoA transferase-like"/>
    <property type="match status" value="1"/>
</dbReference>
<dbReference type="PROSITE" id="PS00198">
    <property type="entry name" value="4FE4S_FER_1"/>
    <property type="match status" value="1"/>
</dbReference>
<name>LUTB_BACCN</name>
<accession>A7GMJ3</accession>
<gene>
    <name evidence="1" type="primary">lutB</name>
    <name type="ordered locus">Bcer98_1025</name>
</gene>
<comment type="function">
    <text evidence="1">Is involved in L-lactate degradation and allows cells to grow with lactate as the sole carbon source. Has probably a role as an electron transporter during oxidation of L-lactate.</text>
</comment>
<comment type="similarity">
    <text evidence="1">Belongs to the LutB/YkgF family.</text>
</comment>
<feature type="chain" id="PRO_0000383969" description="Lactate utilization protein B">
    <location>
        <begin position="1"/>
        <end position="473"/>
    </location>
</feature>
<feature type="domain" description="4Fe-4S ferredoxin-type 1" evidence="1">
    <location>
        <begin position="302"/>
        <end position="332"/>
    </location>
</feature>
<feature type="domain" description="4Fe-4S ferredoxin-type 2" evidence="1">
    <location>
        <begin position="351"/>
        <end position="380"/>
    </location>
</feature>
<feature type="binding site" evidence="1">
    <location>
        <position position="311"/>
    </location>
    <ligand>
        <name>[4Fe-4S] cluster</name>
        <dbReference type="ChEBI" id="CHEBI:49883"/>
        <label>1</label>
    </ligand>
</feature>
<feature type="binding site" evidence="1">
    <location>
        <position position="314"/>
    </location>
    <ligand>
        <name>[4Fe-4S] cluster</name>
        <dbReference type="ChEBI" id="CHEBI:49883"/>
        <label>1</label>
    </ligand>
</feature>
<feature type="binding site" evidence="1">
    <location>
        <position position="317"/>
    </location>
    <ligand>
        <name>[4Fe-4S] cluster</name>
        <dbReference type="ChEBI" id="CHEBI:49883"/>
        <label>1</label>
    </ligand>
</feature>
<feature type="binding site" evidence="1">
    <location>
        <position position="321"/>
    </location>
    <ligand>
        <name>[4Fe-4S] cluster</name>
        <dbReference type="ChEBI" id="CHEBI:49883"/>
        <label>2</label>
    </ligand>
</feature>
<feature type="binding site" evidence="1">
    <location>
        <position position="364"/>
    </location>
    <ligand>
        <name>[4Fe-4S] cluster</name>
        <dbReference type="ChEBI" id="CHEBI:49883"/>
        <label>2</label>
    </ligand>
</feature>
<feature type="binding site" evidence="1">
    <location>
        <position position="367"/>
    </location>
    <ligand>
        <name>[4Fe-4S] cluster</name>
        <dbReference type="ChEBI" id="CHEBI:49883"/>
        <label>2</label>
    </ligand>
</feature>
<feature type="binding site" evidence="1">
    <location>
        <position position="371"/>
    </location>
    <ligand>
        <name>[4Fe-4S] cluster</name>
        <dbReference type="ChEBI" id="CHEBI:49883"/>
        <label>1</label>
    </ligand>
</feature>